<organism>
    <name type="scientific">Salinibacter ruber (strain DSM 13855 / M31)</name>
    <dbReference type="NCBI Taxonomy" id="309807"/>
    <lineage>
        <taxon>Bacteria</taxon>
        <taxon>Pseudomonadati</taxon>
        <taxon>Rhodothermota</taxon>
        <taxon>Rhodothermia</taxon>
        <taxon>Rhodothermales</taxon>
        <taxon>Salinibacteraceae</taxon>
        <taxon>Salinibacter</taxon>
    </lineage>
</organism>
<keyword id="KW-0963">Cytoplasm</keyword>
<keyword id="KW-0227">DNA damage</keyword>
<keyword id="KW-0228">DNA excision</keyword>
<keyword id="KW-0234">DNA repair</keyword>
<keyword id="KW-0267">Excision nuclease</keyword>
<keyword id="KW-1185">Reference proteome</keyword>
<keyword id="KW-0742">SOS response</keyword>
<evidence type="ECO:0000255" key="1">
    <source>
        <dbReference type="HAMAP-Rule" id="MF_00203"/>
    </source>
</evidence>
<dbReference type="EMBL" id="CP000159">
    <property type="protein sequence ID" value="ABC46304.1"/>
    <property type="molecule type" value="Genomic_DNA"/>
</dbReference>
<dbReference type="RefSeq" id="WP_011404327.1">
    <property type="nucleotide sequence ID" value="NC_007677.1"/>
</dbReference>
<dbReference type="RefSeq" id="YP_445701.1">
    <property type="nucleotide sequence ID" value="NC_007677.1"/>
</dbReference>
<dbReference type="SMR" id="Q2S280"/>
<dbReference type="STRING" id="309807.SRU_1580"/>
<dbReference type="EnsemblBacteria" id="ABC46304">
    <property type="protein sequence ID" value="ABC46304"/>
    <property type="gene ID" value="SRU_1580"/>
</dbReference>
<dbReference type="KEGG" id="sru:SRU_1580"/>
<dbReference type="PATRIC" id="fig|309807.25.peg.1634"/>
<dbReference type="eggNOG" id="COG0322">
    <property type="taxonomic scope" value="Bacteria"/>
</dbReference>
<dbReference type="HOGENOM" id="CLU_014841_3_2_10"/>
<dbReference type="OrthoDB" id="9804933at2"/>
<dbReference type="Proteomes" id="UP000008674">
    <property type="component" value="Chromosome"/>
</dbReference>
<dbReference type="GO" id="GO:0005737">
    <property type="term" value="C:cytoplasm"/>
    <property type="evidence" value="ECO:0007669"/>
    <property type="project" value="UniProtKB-SubCell"/>
</dbReference>
<dbReference type="GO" id="GO:0009380">
    <property type="term" value="C:excinuclease repair complex"/>
    <property type="evidence" value="ECO:0007669"/>
    <property type="project" value="InterPro"/>
</dbReference>
<dbReference type="GO" id="GO:0003677">
    <property type="term" value="F:DNA binding"/>
    <property type="evidence" value="ECO:0007669"/>
    <property type="project" value="UniProtKB-UniRule"/>
</dbReference>
<dbReference type="GO" id="GO:0009381">
    <property type="term" value="F:excinuclease ABC activity"/>
    <property type="evidence" value="ECO:0007669"/>
    <property type="project" value="UniProtKB-UniRule"/>
</dbReference>
<dbReference type="GO" id="GO:0006289">
    <property type="term" value="P:nucleotide-excision repair"/>
    <property type="evidence" value="ECO:0007669"/>
    <property type="project" value="UniProtKB-UniRule"/>
</dbReference>
<dbReference type="GO" id="GO:0009432">
    <property type="term" value="P:SOS response"/>
    <property type="evidence" value="ECO:0007669"/>
    <property type="project" value="UniProtKB-UniRule"/>
</dbReference>
<dbReference type="CDD" id="cd10434">
    <property type="entry name" value="GIY-YIG_UvrC_Cho"/>
    <property type="match status" value="1"/>
</dbReference>
<dbReference type="FunFam" id="3.40.1440.10:FF:000001">
    <property type="entry name" value="UvrABC system protein C"/>
    <property type="match status" value="1"/>
</dbReference>
<dbReference type="Gene3D" id="1.10.150.20">
    <property type="entry name" value="5' to 3' exonuclease, C-terminal subdomain"/>
    <property type="match status" value="1"/>
</dbReference>
<dbReference type="Gene3D" id="3.40.1440.10">
    <property type="entry name" value="GIY-YIG endonuclease"/>
    <property type="match status" value="1"/>
</dbReference>
<dbReference type="Gene3D" id="4.10.860.10">
    <property type="entry name" value="UVR domain"/>
    <property type="match status" value="1"/>
</dbReference>
<dbReference type="Gene3D" id="3.30.420.340">
    <property type="entry name" value="UvrC, RNAse H endonuclease domain"/>
    <property type="match status" value="1"/>
</dbReference>
<dbReference type="HAMAP" id="MF_00203">
    <property type="entry name" value="UvrC"/>
    <property type="match status" value="1"/>
</dbReference>
<dbReference type="InterPro" id="IPR000305">
    <property type="entry name" value="GIY-YIG_endonuc"/>
</dbReference>
<dbReference type="InterPro" id="IPR035901">
    <property type="entry name" value="GIY-YIG_endonuc_sf"/>
</dbReference>
<dbReference type="InterPro" id="IPR047296">
    <property type="entry name" value="GIY-YIG_UvrC_Cho"/>
</dbReference>
<dbReference type="InterPro" id="IPR010994">
    <property type="entry name" value="RuvA_2-like"/>
</dbReference>
<dbReference type="InterPro" id="IPR001943">
    <property type="entry name" value="UVR_dom"/>
</dbReference>
<dbReference type="InterPro" id="IPR036876">
    <property type="entry name" value="UVR_dom_sf"/>
</dbReference>
<dbReference type="InterPro" id="IPR050066">
    <property type="entry name" value="UvrABC_protein_C"/>
</dbReference>
<dbReference type="InterPro" id="IPR004791">
    <property type="entry name" value="UvrC"/>
</dbReference>
<dbReference type="InterPro" id="IPR001162">
    <property type="entry name" value="UvrC_RNase_H_dom"/>
</dbReference>
<dbReference type="InterPro" id="IPR038476">
    <property type="entry name" value="UvrC_RNase_H_dom_sf"/>
</dbReference>
<dbReference type="NCBIfam" id="NF001824">
    <property type="entry name" value="PRK00558.1-5"/>
    <property type="match status" value="1"/>
</dbReference>
<dbReference type="NCBIfam" id="TIGR00194">
    <property type="entry name" value="uvrC"/>
    <property type="match status" value="1"/>
</dbReference>
<dbReference type="PANTHER" id="PTHR30562:SF1">
    <property type="entry name" value="UVRABC SYSTEM PROTEIN C"/>
    <property type="match status" value="1"/>
</dbReference>
<dbReference type="PANTHER" id="PTHR30562">
    <property type="entry name" value="UVRC/OXIDOREDUCTASE"/>
    <property type="match status" value="1"/>
</dbReference>
<dbReference type="Pfam" id="PF01541">
    <property type="entry name" value="GIY-YIG"/>
    <property type="match status" value="1"/>
</dbReference>
<dbReference type="Pfam" id="PF14520">
    <property type="entry name" value="HHH_5"/>
    <property type="match status" value="1"/>
</dbReference>
<dbReference type="Pfam" id="PF02151">
    <property type="entry name" value="UVR"/>
    <property type="match status" value="1"/>
</dbReference>
<dbReference type="Pfam" id="PF22920">
    <property type="entry name" value="UvrC_RNaseH"/>
    <property type="match status" value="1"/>
</dbReference>
<dbReference type="Pfam" id="PF08459">
    <property type="entry name" value="UvrC_RNaseH_dom"/>
    <property type="match status" value="1"/>
</dbReference>
<dbReference type="SMART" id="SM00465">
    <property type="entry name" value="GIYc"/>
    <property type="match status" value="1"/>
</dbReference>
<dbReference type="SUPFAM" id="SSF46600">
    <property type="entry name" value="C-terminal UvrC-binding domain of UvrB"/>
    <property type="match status" value="1"/>
</dbReference>
<dbReference type="SUPFAM" id="SSF82771">
    <property type="entry name" value="GIY-YIG endonuclease"/>
    <property type="match status" value="1"/>
</dbReference>
<dbReference type="SUPFAM" id="SSF47781">
    <property type="entry name" value="RuvA domain 2-like"/>
    <property type="match status" value="1"/>
</dbReference>
<dbReference type="PROSITE" id="PS50164">
    <property type="entry name" value="GIY_YIG"/>
    <property type="match status" value="1"/>
</dbReference>
<dbReference type="PROSITE" id="PS50151">
    <property type="entry name" value="UVR"/>
    <property type="match status" value="1"/>
</dbReference>
<dbReference type="PROSITE" id="PS50165">
    <property type="entry name" value="UVRC"/>
    <property type="match status" value="1"/>
</dbReference>
<proteinExistence type="inferred from homology"/>
<reference key="1">
    <citation type="journal article" date="2005" name="Proc. Natl. Acad. Sci. U.S.A.">
        <title>The genome of Salinibacter ruber: convergence and gene exchange among hyperhalophilic bacteria and archaea.</title>
        <authorList>
            <person name="Mongodin E.F."/>
            <person name="Nelson K.E."/>
            <person name="Daugherty S."/>
            <person name="DeBoy R.T."/>
            <person name="Wister J."/>
            <person name="Khouri H."/>
            <person name="Weidman J."/>
            <person name="Walsh D.A."/>
            <person name="Papke R.T."/>
            <person name="Sanchez Perez G."/>
            <person name="Sharma A.K."/>
            <person name="Nesbo C.L."/>
            <person name="MacLeod D."/>
            <person name="Bapteste E."/>
            <person name="Doolittle W.F."/>
            <person name="Charlebois R.L."/>
            <person name="Legault B."/>
            <person name="Rodriguez-Valera F."/>
        </authorList>
    </citation>
    <scope>NUCLEOTIDE SEQUENCE [LARGE SCALE GENOMIC DNA]</scope>
    <source>
        <strain>DSM 13855 / CECT 5946 / M31</strain>
    </source>
</reference>
<protein>
    <recommendedName>
        <fullName evidence="1">UvrABC system protein C</fullName>
        <shortName evidence="1">Protein UvrC</shortName>
    </recommendedName>
    <alternativeName>
        <fullName evidence="1">Excinuclease ABC subunit C</fullName>
    </alternativeName>
</protein>
<comment type="function">
    <text evidence="1">The UvrABC repair system catalyzes the recognition and processing of DNA lesions. UvrC both incises the 5' and 3' sides of the lesion. The N-terminal half is responsible for the 3' incision and the C-terminal half is responsible for the 5' incision.</text>
</comment>
<comment type="subunit">
    <text evidence="1">Interacts with UvrB in an incision complex.</text>
</comment>
<comment type="subcellular location">
    <subcellularLocation>
        <location evidence="1">Cytoplasm</location>
    </subcellularLocation>
</comment>
<comment type="similarity">
    <text evidence="1">Belongs to the UvrC family.</text>
</comment>
<feature type="chain" id="PRO_0000264944" description="UvrABC system protein C">
    <location>
        <begin position="1"/>
        <end position="633"/>
    </location>
</feature>
<feature type="domain" description="GIY-YIG" evidence="1">
    <location>
        <begin position="21"/>
        <end position="100"/>
    </location>
</feature>
<feature type="domain" description="UVR" evidence="1">
    <location>
        <begin position="214"/>
        <end position="249"/>
    </location>
</feature>
<accession>Q2S280</accession>
<sequence>MSEVLDDKPEVLVQKLDALPTDPGVYKFLDDEESVLYVGKAKNLRNRVRTYFQQSRQRDGRIEVMVQKAVDVDIIVTDTEAEALILENNQIKELQPRYNVNLRDDKTYPYICIKNERFPRVFKTRTVKQDGSEYFGPYADVSKMNSMMDAIRSVFQLRTCSLDLTEEKIEAGKYDVCLQHHIDNCKAPCVGKQSEADYMETIEQVKKLLNGQTQELMDLLKDEMQRQSDAHNFEEAARLRDQVKALKDYSQQQKVVSQDFADRDVFALHVERDEDIGCGVLFQVREGKMIGKRHKFLRSVEERSDAELILSLVENYYAEANFYPEEVLLSHDPNDHPAQDTHALEELLRQEQGHQVPIKVPQRGEKASLVRMATSNAKLQVGEWKTQQMKRERNRIPESIKALGEALNMEAPPRRVDGIDVSHHGGKETVASCVVFTDATPRKSDYRTYKIRSTEEGTPDDYKAMREVVRRRYRRMVEEDGPWPDLVVIDGGKGQLSSAVEMLKEVGAFDRFPVIGLAKRLEEVYRPGDSDPVFLAKDSPALQLLQKVRDEAHRFAVTYQRKRRKKKTLQSELLDIHGIGPKTAKKLLGEFGSAAKVKEADEEALAEVVGPAKAETITDYYDETEAPAPAETE</sequence>
<name>UVRC_SALRD</name>
<gene>
    <name evidence="1" type="primary">uvrC</name>
    <name type="ordered locus">SRU_1580</name>
</gene>